<dbReference type="EMBL" id="AF257518">
    <property type="protein sequence ID" value="AAF68999.1"/>
    <property type="molecule type" value="mRNA"/>
</dbReference>
<dbReference type="EMBL" id="BX284603">
    <property type="protein sequence ID" value="CAA84644.2"/>
    <property type="molecule type" value="Genomic_DNA"/>
</dbReference>
<dbReference type="EMBL" id="BX284603">
    <property type="protein sequence ID" value="CAO78712.1"/>
    <property type="molecule type" value="Genomic_DNA"/>
</dbReference>
<dbReference type="EMBL" id="BX284603">
    <property type="protein sequence ID" value="CAO78713.1"/>
    <property type="molecule type" value="Genomic_DNA"/>
</dbReference>
<dbReference type="EMBL" id="BX284603">
    <property type="protein sequence ID" value="CAO78714.1"/>
    <property type="molecule type" value="Genomic_DNA"/>
</dbReference>
<dbReference type="EMBL" id="BX284603">
    <property type="protein sequence ID" value="CAO78715.1"/>
    <property type="molecule type" value="Genomic_DNA"/>
</dbReference>
<dbReference type="EMBL" id="BX284603">
    <property type="protein sequence ID" value="CAO78716.1"/>
    <property type="molecule type" value="Genomic_DNA"/>
</dbReference>
<dbReference type="EMBL" id="BX284603">
    <property type="protein sequence ID" value="CAO78717.1"/>
    <property type="molecule type" value="Genomic_DNA"/>
</dbReference>
<dbReference type="EMBL" id="BX284603">
    <property type="protein sequence ID" value="CAO78718.1"/>
    <property type="molecule type" value="Genomic_DNA"/>
</dbReference>
<dbReference type="EMBL" id="BX284603">
    <property type="protein sequence ID" value="CCU83367.1"/>
    <property type="molecule type" value="Genomic_DNA"/>
</dbReference>
<dbReference type="EMBL" id="BX284603">
    <property type="protein sequence ID" value="CCU83368.1"/>
    <property type="molecule type" value="Genomic_DNA"/>
</dbReference>
<dbReference type="PIR" id="T19579">
    <property type="entry name" value="T19579"/>
</dbReference>
<dbReference type="RefSeq" id="NP_001122682.1">
    <property type="nucleotide sequence ID" value="NM_001129210.2"/>
</dbReference>
<dbReference type="RefSeq" id="NP_001122683.1">
    <property type="nucleotide sequence ID" value="NM_001129211.1"/>
</dbReference>
<dbReference type="RefSeq" id="NP_001122684.1">
    <property type="nucleotide sequence ID" value="NM_001129212.1"/>
</dbReference>
<dbReference type="RefSeq" id="NP_001122685.1">
    <property type="nucleotide sequence ID" value="NM_001129213.1"/>
</dbReference>
<dbReference type="RefSeq" id="NP_001122686.1">
    <property type="nucleotide sequence ID" value="NM_001129214.1"/>
</dbReference>
<dbReference type="RefSeq" id="NP_001122687.1">
    <molecule id="G5EFJ9-7"/>
    <property type="nucleotide sequence ID" value="NM_001129215.1"/>
</dbReference>
<dbReference type="RefSeq" id="NP_001122688.1">
    <property type="nucleotide sequence ID" value="NM_001129216.1"/>
</dbReference>
<dbReference type="RefSeq" id="NP_001293649.1">
    <molecule id="G5EFJ9-9"/>
    <property type="nucleotide sequence ID" value="NM_001306720.3"/>
</dbReference>
<dbReference type="RefSeq" id="NP_001293650.1">
    <property type="nucleotide sequence ID" value="NM_001306721.1"/>
</dbReference>
<dbReference type="RefSeq" id="NP_001366693.1">
    <molecule id="G5EFJ9-8"/>
    <property type="nucleotide sequence ID" value="NM_001381823.1"/>
</dbReference>
<dbReference type="RefSeq" id="NP_001367165.1">
    <molecule id="G5EFJ9-3"/>
    <property type="nucleotide sequence ID" value="NM_001381818.1"/>
</dbReference>
<dbReference type="RefSeq" id="NP_001367166.1">
    <molecule id="G5EFJ9-2"/>
    <property type="nucleotide sequence ID" value="NM_001381819.1"/>
</dbReference>
<dbReference type="RefSeq" id="NP_001367167.1">
    <molecule id="G5EFJ9-6"/>
    <property type="nucleotide sequence ID" value="NM_001381821.1"/>
</dbReference>
<dbReference type="RefSeq" id="NP_001367168.1">
    <molecule id="G5EFJ9-5"/>
    <property type="nucleotide sequence ID" value="NM_001381822.1"/>
</dbReference>
<dbReference type="RefSeq" id="NP_001368173.1">
    <molecule id="G5EFJ9-10"/>
    <property type="nucleotide sequence ID" value="NM_001381820.1"/>
</dbReference>
<dbReference type="RefSeq" id="NP_001370238.1">
    <molecule id="G5EFJ9-1"/>
    <property type="nucleotide sequence ID" value="NM_001384063.2"/>
</dbReference>
<dbReference type="RefSeq" id="NP_497824.1">
    <property type="nucleotide sequence ID" value="NM_065423.5"/>
</dbReference>
<dbReference type="SMR" id="G5EFJ9"/>
<dbReference type="FunCoup" id="G5EFJ9">
    <property type="interactions" value="917"/>
</dbReference>
<dbReference type="STRING" id="6239.C30D11.1j.1"/>
<dbReference type="GlyCosmos" id="G5EFJ9">
    <property type="glycosylation" value="1 site, No reported glycans"/>
</dbReference>
<dbReference type="PaxDb" id="6239-C30D11.1j"/>
<dbReference type="EnsemblMetazoa" id="C30D11.1a.1">
    <molecule id="G5EFJ9-1"/>
    <property type="protein sequence ID" value="C30D11.1a.1"/>
    <property type="gene ID" value="WBGene00006830"/>
</dbReference>
<dbReference type="EnsemblMetazoa" id="C30D11.1b.1">
    <molecule id="G5EFJ9-3"/>
    <property type="protein sequence ID" value="C30D11.1b.1"/>
    <property type="gene ID" value="WBGene00006830"/>
</dbReference>
<dbReference type="EnsemblMetazoa" id="C30D11.1c.1">
    <molecule id="G5EFJ9-2"/>
    <property type="protein sequence ID" value="C30D11.1c.1"/>
    <property type="gene ID" value="WBGene00006830"/>
</dbReference>
<dbReference type="EnsemblMetazoa" id="C30D11.1d.1">
    <molecule id="G5EFJ9-6"/>
    <property type="protein sequence ID" value="C30D11.1d.1"/>
    <property type="gene ID" value="WBGene00006830"/>
</dbReference>
<dbReference type="EnsemblMetazoa" id="C30D11.1e.1">
    <molecule id="G5EFJ9-5"/>
    <property type="protein sequence ID" value="C30D11.1e.1"/>
    <property type="gene ID" value="WBGene00006830"/>
</dbReference>
<dbReference type="EnsemblMetazoa" id="C30D11.1f.1">
    <molecule id="G5EFJ9-8"/>
    <property type="protein sequence ID" value="C30D11.1f.1"/>
    <property type="gene ID" value="WBGene00006830"/>
</dbReference>
<dbReference type="EnsemblMetazoa" id="C30D11.1g.1">
    <molecule id="G5EFJ9-7"/>
    <property type="protein sequence ID" value="C30D11.1g.1"/>
    <property type="gene ID" value="WBGene00006830"/>
</dbReference>
<dbReference type="EnsemblMetazoa" id="C30D11.1h.1">
    <property type="protein sequence ID" value="C30D11.1h.1"/>
    <property type="gene ID" value="WBGene00006830"/>
</dbReference>
<dbReference type="EnsemblMetazoa" id="C30D11.1i.1">
    <molecule id="G5EFJ9-9"/>
    <property type="protein sequence ID" value="C30D11.1i.1"/>
    <property type="gene ID" value="WBGene00006830"/>
</dbReference>
<dbReference type="EnsemblMetazoa" id="C30D11.1j.1">
    <molecule id="G5EFJ9-10"/>
    <property type="protein sequence ID" value="C30D11.1j.1"/>
    <property type="gene ID" value="WBGene00006830"/>
</dbReference>
<dbReference type="GeneID" id="175527"/>
<dbReference type="KEGG" id="cel:CELE_C30D11.1"/>
<dbReference type="AGR" id="WB:WBGene00006830"/>
<dbReference type="CTD" id="175527"/>
<dbReference type="WormBase" id="C30D11.1a">
    <molecule id="G5EFJ9-1"/>
    <property type="protein sequence ID" value="CE41297"/>
    <property type="gene ID" value="WBGene00006830"/>
    <property type="gene designation" value="unc-103"/>
</dbReference>
<dbReference type="WormBase" id="C30D11.1b">
    <molecule id="G5EFJ9-3"/>
    <property type="protein sequence ID" value="CE41298"/>
    <property type="gene ID" value="WBGene00006830"/>
    <property type="gene designation" value="unc-103"/>
</dbReference>
<dbReference type="WormBase" id="C30D11.1c">
    <molecule id="G5EFJ9-2"/>
    <property type="protein sequence ID" value="CE41299"/>
    <property type="gene ID" value="WBGene00006830"/>
    <property type="gene designation" value="unc-103"/>
</dbReference>
<dbReference type="WormBase" id="C30D11.1d">
    <molecule id="G5EFJ9-6"/>
    <property type="protein sequence ID" value="CE41300"/>
    <property type="gene ID" value="WBGene00006830"/>
    <property type="gene designation" value="unc-103"/>
</dbReference>
<dbReference type="WormBase" id="C30D11.1e">
    <molecule id="G5EFJ9-5"/>
    <property type="protein sequence ID" value="CE41301"/>
    <property type="gene ID" value="WBGene00006830"/>
    <property type="gene designation" value="unc-103"/>
</dbReference>
<dbReference type="WormBase" id="C30D11.1f">
    <molecule id="G5EFJ9-8"/>
    <property type="protein sequence ID" value="CE27805"/>
    <property type="gene ID" value="WBGene00006830"/>
    <property type="gene designation" value="unc-103"/>
</dbReference>
<dbReference type="WormBase" id="C30D11.1g">
    <molecule id="G5EFJ9-7"/>
    <property type="protein sequence ID" value="CE41302"/>
    <property type="gene ID" value="WBGene00006830"/>
    <property type="gene designation" value="unc-103"/>
</dbReference>
<dbReference type="WormBase" id="C30D11.1h">
    <property type="protein sequence ID" value="CE41303"/>
    <property type="gene ID" value="WBGene00006830"/>
    <property type="gene designation" value="unc-103"/>
</dbReference>
<dbReference type="WormBase" id="C30D11.1i">
    <molecule id="G5EFJ9-9"/>
    <property type="protein sequence ID" value="CE48274"/>
    <property type="gene ID" value="WBGene00006830"/>
    <property type="gene designation" value="unc-103"/>
</dbReference>
<dbReference type="WormBase" id="C30D11.1j">
    <molecule id="G5EFJ9-10"/>
    <property type="protein sequence ID" value="CE48244"/>
    <property type="gene ID" value="WBGene00006830"/>
    <property type="gene designation" value="unc-103"/>
</dbReference>
<dbReference type="eggNOG" id="KOG0498">
    <property type="taxonomic scope" value="Eukaryota"/>
</dbReference>
<dbReference type="GeneTree" id="ENSGT00940000171203"/>
<dbReference type="InParanoid" id="G5EFJ9"/>
<dbReference type="OMA" id="HRPNNYI"/>
<dbReference type="OrthoDB" id="432483at2759"/>
<dbReference type="PRO" id="PR:G5EFJ9"/>
<dbReference type="Proteomes" id="UP000001940">
    <property type="component" value="Chromosome III"/>
</dbReference>
<dbReference type="Bgee" id="WBGene00006830">
    <property type="expression patterns" value="Expressed in larva and 3 other cell types or tissues"/>
</dbReference>
<dbReference type="GO" id="GO:0034702">
    <property type="term" value="C:monoatomic ion channel complex"/>
    <property type="evidence" value="ECO:0007669"/>
    <property type="project" value="UniProtKB-KW"/>
</dbReference>
<dbReference type="GO" id="GO:0005886">
    <property type="term" value="C:plasma membrane"/>
    <property type="evidence" value="ECO:0000318"/>
    <property type="project" value="GO_Central"/>
</dbReference>
<dbReference type="GO" id="GO:0005242">
    <property type="term" value="F:inward rectifier potassium channel activity"/>
    <property type="evidence" value="ECO:0000318"/>
    <property type="project" value="GO_Central"/>
</dbReference>
<dbReference type="GO" id="GO:0007617">
    <property type="term" value="P:mating behavior"/>
    <property type="evidence" value="ECO:0000315"/>
    <property type="project" value="WormBase"/>
</dbReference>
<dbReference type="GO" id="GO:0071805">
    <property type="term" value="P:potassium ion transmembrane transport"/>
    <property type="evidence" value="ECO:0000318"/>
    <property type="project" value="GO_Central"/>
</dbReference>
<dbReference type="GO" id="GO:0046662">
    <property type="term" value="P:regulation of egg-laying behavior"/>
    <property type="evidence" value="ECO:0000303"/>
    <property type="project" value="WormBase"/>
</dbReference>
<dbReference type="GO" id="GO:0042391">
    <property type="term" value="P:regulation of membrane potential"/>
    <property type="evidence" value="ECO:0000318"/>
    <property type="project" value="GO_Central"/>
</dbReference>
<dbReference type="GO" id="GO:0006937">
    <property type="term" value="P:regulation of muscle contraction"/>
    <property type="evidence" value="ECO:0000315"/>
    <property type="project" value="WormBase"/>
</dbReference>
<dbReference type="CDD" id="cd00038">
    <property type="entry name" value="CAP_ED"/>
    <property type="match status" value="1"/>
</dbReference>
<dbReference type="FunFam" id="1.10.287.70:FF:000020">
    <property type="entry name" value="Potassium channel, voltage-gated eag-related subfamily H, member 7"/>
    <property type="match status" value="1"/>
</dbReference>
<dbReference type="FunFam" id="1.10.1200.260:FF:000001">
    <property type="entry name" value="Potassium voltage-gated channel subfamily H member 7"/>
    <property type="match status" value="1"/>
</dbReference>
<dbReference type="FunFam" id="2.60.120.10:FF:000107">
    <property type="entry name" value="Potassium voltage-gated channel unc-103"/>
    <property type="match status" value="1"/>
</dbReference>
<dbReference type="Gene3D" id="1.10.1200.260">
    <property type="match status" value="1"/>
</dbReference>
<dbReference type="Gene3D" id="1.10.287.70">
    <property type="match status" value="1"/>
</dbReference>
<dbReference type="Gene3D" id="2.60.120.10">
    <property type="entry name" value="Jelly Rolls"/>
    <property type="match status" value="1"/>
</dbReference>
<dbReference type="InterPro" id="IPR000595">
    <property type="entry name" value="cNMP-bd_dom"/>
</dbReference>
<dbReference type="InterPro" id="IPR018490">
    <property type="entry name" value="cNMP-bd_dom_sf"/>
</dbReference>
<dbReference type="InterPro" id="IPR005821">
    <property type="entry name" value="Ion_trans_dom"/>
</dbReference>
<dbReference type="InterPro" id="IPR003938">
    <property type="entry name" value="K_chnl_volt-dep_EAG/ELK/ERG"/>
</dbReference>
<dbReference type="InterPro" id="IPR003967">
    <property type="entry name" value="K_chnl_volt-dep_ERG"/>
</dbReference>
<dbReference type="InterPro" id="IPR050818">
    <property type="entry name" value="KCNH_animal-type"/>
</dbReference>
<dbReference type="InterPro" id="IPR014710">
    <property type="entry name" value="RmlC-like_jellyroll"/>
</dbReference>
<dbReference type="PANTHER" id="PTHR10217:SF548">
    <property type="entry name" value="GH12235P"/>
    <property type="match status" value="1"/>
</dbReference>
<dbReference type="PANTHER" id="PTHR10217">
    <property type="entry name" value="VOLTAGE AND LIGAND GATED POTASSIUM CHANNEL"/>
    <property type="match status" value="1"/>
</dbReference>
<dbReference type="Pfam" id="PF00027">
    <property type="entry name" value="cNMP_binding"/>
    <property type="match status" value="1"/>
</dbReference>
<dbReference type="Pfam" id="PF00520">
    <property type="entry name" value="Ion_trans"/>
    <property type="match status" value="1"/>
</dbReference>
<dbReference type="PRINTS" id="PR01463">
    <property type="entry name" value="EAGCHANLFMLY"/>
</dbReference>
<dbReference type="PRINTS" id="PR01470">
    <property type="entry name" value="ERGCHANNEL"/>
</dbReference>
<dbReference type="SMART" id="SM00100">
    <property type="entry name" value="cNMP"/>
    <property type="match status" value="1"/>
</dbReference>
<dbReference type="SUPFAM" id="SSF51206">
    <property type="entry name" value="cAMP-binding domain-like"/>
    <property type="match status" value="1"/>
</dbReference>
<dbReference type="SUPFAM" id="SSF81324">
    <property type="entry name" value="Voltage-gated potassium channels"/>
    <property type="match status" value="1"/>
</dbReference>
<dbReference type="PROSITE" id="PS50042">
    <property type="entry name" value="CNMP_BINDING_3"/>
    <property type="match status" value="1"/>
</dbReference>
<protein>
    <recommendedName>
        <fullName evidence="10">Potassium voltage-gated channel unc-103</fullName>
    </recommendedName>
    <alternativeName>
        <fullName evidence="1">Ether-a-go-go-related gene potassium channel homolog</fullName>
        <shortName evidence="1">ERG homolog</shortName>
        <shortName evidence="1">Eag-related protein homolog</shortName>
        <shortName evidence="1">Ether-a-go-go-related protein homolog</shortName>
    </alternativeName>
    <alternativeName>
        <fullName evidence="9">Uncoordinated protein 103</fullName>
    </alternativeName>
</protein>
<evidence type="ECO:0000250" key="1">
    <source>
        <dbReference type="UniProtKB" id="Q12809"/>
    </source>
</evidence>
<evidence type="ECO:0000255" key="2"/>
<evidence type="ECO:0000255" key="3">
    <source>
        <dbReference type="PROSITE-ProRule" id="PRU00060"/>
    </source>
</evidence>
<evidence type="ECO:0000255" key="4">
    <source>
        <dbReference type="PROSITE-ProRule" id="PRU00498"/>
    </source>
</evidence>
<evidence type="ECO:0000256" key="5">
    <source>
        <dbReference type="SAM" id="MobiDB-lite"/>
    </source>
</evidence>
<evidence type="ECO:0000269" key="6">
    <source>
    </source>
</evidence>
<evidence type="ECO:0000269" key="7">
    <source>
    </source>
</evidence>
<evidence type="ECO:0000269" key="8">
    <source>
    </source>
</evidence>
<evidence type="ECO:0000303" key="9">
    <source>
    </source>
</evidence>
<evidence type="ECO:0000305" key="10"/>
<evidence type="ECO:0000312" key="11">
    <source>
        <dbReference type="WormBase" id="C30D11.1a"/>
    </source>
</evidence>
<feature type="chain" id="PRO_0000439645" description="Potassium voltage-gated channel unc-103">
    <location>
        <begin position="1"/>
        <end position="829"/>
    </location>
</feature>
<feature type="topological domain" description="Cytoplasmic" evidence="10">
    <location>
        <begin position="1"/>
        <end position="123"/>
    </location>
</feature>
<feature type="transmembrane region" description="Helical; Name=Segment S1" evidence="2">
    <location>
        <begin position="124"/>
        <end position="144"/>
    </location>
</feature>
<feature type="topological domain" description="Extracellular" evidence="10">
    <location>
        <begin position="145"/>
        <end position="158"/>
    </location>
</feature>
<feature type="transmembrane region" description="Helical; Name=Segment S2" evidence="2">
    <location>
        <begin position="159"/>
        <end position="179"/>
    </location>
</feature>
<feature type="topological domain" description="Cytoplasmic" evidence="10">
    <location>
        <begin position="180"/>
        <end position="203"/>
    </location>
</feature>
<feature type="transmembrane region" description="Helical; Name=Segment S3" evidence="2">
    <location>
        <begin position="204"/>
        <end position="224"/>
    </location>
</feature>
<feature type="topological domain" description="Extracellular" evidence="10">
    <location>
        <begin position="225"/>
        <end position="234"/>
    </location>
</feature>
<feature type="transmembrane region" description="Helical; Voltage-sensor; Name=Segment S4" evidence="2">
    <location>
        <begin position="235"/>
        <end position="255"/>
    </location>
</feature>
<feature type="topological domain" description="Cytoplasmic" evidence="10">
    <location>
        <begin position="256"/>
        <end position="261"/>
    </location>
</feature>
<feature type="transmembrane region" description="Helical; Name=Segment S5" evidence="2">
    <location>
        <begin position="262"/>
        <end position="282"/>
    </location>
</feature>
<feature type="topological domain" description="Extracellular" evidence="10">
    <location>
        <begin position="283"/>
        <end position="327"/>
    </location>
</feature>
<feature type="intramembrane region" description="Pore-forming; Name=Segment H5" evidence="2">
    <location>
        <begin position="328"/>
        <end position="348"/>
    </location>
</feature>
<feature type="topological domain" description="Extracellular" evidence="10">
    <location>
        <begin position="349"/>
        <end position="354"/>
    </location>
</feature>
<feature type="transmembrane region" description="Helical; Name=Segment S6" evidence="2">
    <location>
        <begin position="355"/>
        <end position="375"/>
    </location>
</feature>
<feature type="topological domain" description="Cytoplasmic" evidence="10">
    <location>
        <begin position="376"/>
        <end position="829"/>
    </location>
</feature>
<feature type="region of interest" description="Disordered" evidence="5">
    <location>
        <begin position="1"/>
        <end position="76"/>
    </location>
</feature>
<feature type="region of interest" description="Disordered" evidence="5">
    <location>
        <begin position="601"/>
        <end position="674"/>
    </location>
</feature>
<feature type="compositionally biased region" description="Gly residues" evidence="5">
    <location>
        <begin position="46"/>
        <end position="66"/>
    </location>
</feature>
<feature type="compositionally biased region" description="Basic and acidic residues" evidence="5">
    <location>
        <begin position="603"/>
        <end position="615"/>
    </location>
</feature>
<feature type="compositionally biased region" description="Low complexity" evidence="5">
    <location>
        <begin position="640"/>
        <end position="650"/>
    </location>
</feature>
<feature type="binding site" evidence="3">
    <location>
        <begin position="458"/>
        <end position="559"/>
    </location>
    <ligand>
        <name>a nucleoside 3',5'-cyclic phosphate</name>
        <dbReference type="ChEBI" id="CHEBI:58464"/>
    </ligand>
</feature>
<feature type="glycosylation site" description="N-linked (GlcNAc...) asparagine" evidence="4">
    <location>
        <position position="313"/>
    </location>
</feature>
<feature type="splice variant" id="VSP_058896" description="In isoform b.">
    <original>MKTAVFGRDSGEPGSPCGAPPSLTFTPPATLVPPTHHHSRSTNRGGVSGTGGGGSGGLQGAPGAGGPRASHSSRRTSRLHNNVSALG</original>
    <variation>MDRTRPSVRNYSLDLTRHRKLTADAKAVSPSSCSVKFMPEVLDNHGTTTSARKHSSLSQPALRCHSKQHHNILSPHALA</variation>
    <location>
        <begin position="1"/>
        <end position="87"/>
    </location>
</feature>
<feature type="splice variant" id="VSP_058897" description="In isoform c.">
    <original>MKTAVFGRDSGEPGSPCGAPPSLTFTPPATLVPPTHHHSRSTNRGGVSGTGGGGSGGLQGAPGAGGPRASHSSRRTSRLHNNVSALG</original>
    <variation>MDSSVPMIDLSSGDDEEVEVAMRRSYLLPPVPERPDGFPSLLFGNGNLSRSTLSINQEISMAPSPFSEITVSSQRPLVARSGSNSSEHNLQIKEAVKKKPVADIAHVSGTFVCVCVRGAQK</variation>
    <location>
        <begin position="1"/>
        <end position="87"/>
    </location>
</feature>
<feature type="splice variant" id="VSP_058898" description="In isoform d.">
    <original>MKTAVFGRDSGEPGSPCGAPPSLTFTPPATLVPPTHHHSRSTNRGGVSGTGGGGSGGLQGAPGAGGPRASHSSRRTSRLHNNVSALG</original>
    <variation>MPRRPPLLRLAPVPEDEEDDEVFFEPADKNDDKQRFLPKQSRGSSRFVSEDVLNNSDDEEENK</variation>
    <location>
        <begin position="1"/>
        <end position="87"/>
    </location>
</feature>
<feature type="splice variant" id="VSP_058899" description="In isoform e.">
    <original>MKTAVFGRDSGEPGSPCGAPPSLTFTPPATLVPPTHHHSRSTNRGGVSGTGGGGSGGLQGAPGAGGPRASHSSRRTSRLHNNVSALG</original>
    <variation>MVGGGGGGGAGGSSTRRNAAIASTSSTTSSAAGRRASAFVRRMSMAIPTLSADPVPFSA</variation>
    <location>
        <begin position="1"/>
        <end position="87"/>
    </location>
</feature>
<feature type="splice variant" id="VSP_058900" description="In isoform h, isoform g and isoform f.">
    <original>MKTAVFGRDSGEPGSPCGAPPSLTFTPPATLVPPTHHHSRSTNRGGVSGTGGGGSGGLQGAPGAGGPRASHSSRRTSRLHNNVSALG</original>
    <variation>MSSSTNHTGIIQHHPSQSQQQATTSSGAGNAVASQAKQLMVVLQSGSYK</variation>
    <location>
        <begin position="1"/>
        <end position="87"/>
    </location>
</feature>
<feature type="splice variant" id="VSP_058901" description="In isoform i.">
    <original>MKTAVFGRDSGEPGSPCGAPPSLTFTPPATLVPPTHHHSRSTNRGGVSGTGGGGSGGLQGAPGAGGPRASHSSRRTSRLHNNVSALG</original>
    <variation>MRA</variation>
    <location>
        <begin position="1"/>
        <end position="87"/>
    </location>
</feature>
<feature type="splice variant" id="VSP_058902" description="In isoform j.">
    <original>MKTAVFGRDSGEPGSPCGAPPSLTFTPPATLVPPTHHHSRSTNRGGVSGTGGGGSGGLQGAPGAGGPRASHSSRRTSRLHNNVSALG</original>
    <variation>MPRRPPLLRLAPVPEDEEDDEVFFEPADKNDDKQRFLPKQSRGSSRFVSEDVLNNSDDEEENKRCHLVSSSHASLRSLSPCPSLQSSSSIGGCGGGGMVGGGGGGGAGGSSTRRNAAIASTSSTTSSAAGRRASAFVRRMSMAIPTLSADPVPFSA</variation>
    <location>
        <begin position="1"/>
        <end position="87"/>
    </location>
</feature>
<feature type="splice variant" id="VSP_058903" description="In isoform h and isoform g.">
    <original>SSSRCSPPHAALTATRSEATPLLRRSTNHHEEDDALFDDIRAFARGNTVTMSPTVAGNSVSPTTAIHNDGIHSQQLSD</original>
    <variation>N</variation>
    <location>
        <begin position="645"/>
        <end position="722"/>
    </location>
</feature>
<feature type="splice variant" id="VSP_058904" description="In isoform h.">
    <original>EPN</original>
    <variation>RRR</variation>
    <location>
        <begin position="779"/>
        <end position="781"/>
    </location>
</feature>
<feature type="splice variant" id="VSP_058905" description="In isoform h.">
    <location>
        <begin position="782"/>
        <end position="829"/>
    </location>
</feature>
<feature type="mutagenesis site" description="In sy557; causes spontaneous contractions of the spicule muscles, inducing spicule protraction in the absence of mating cues; when associated with R-282." evidence="6">
    <original>H</original>
    <variation>N</variation>
    <location>
        <position position="203"/>
    </location>
</feature>
<feature type="mutagenesis site" description="In sy557; causes spontaneous contractions of the spicule muscles, inducing spicule protraction in the absence of mating cues; when associated with N-203." evidence="6">
    <original>W</original>
    <variation>R</variation>
    <location>
        <position position="282"/>
    </location>
</feature>
<feature type="mutagenesis site" description="In sy670; causes spontaneous contractions of the spicule muscles, inducing spicule protraction in the absence of mating cues." evidence="6">
    <original>G</original>
    <variation>E</variation>
    <location>
        <position position="344"/>
    </location>
</feature>
<feature type="mutagenesis site" description="In n500 and e1597; gain-of-function mutation which causes locomotive and egg-laying defects as well as pharyngeal-pumping defect." evidence="7 8">
    <original>A</original>
    <variation>T</variation>
    <location>
        <position position="369"/>
    </location>
</feature>
<feature type="mutagenesis site" description="In sy674; causes mild contractions of the spicule muscles, inducing spicule protraction in the absence of mating cues." evidence="6">
    <original>P</original>
    <variation>S</variation>
    <location>
        <position position="464"/>
    </location>
</feature>
<sequence>MKTAVFGRDSGEPGSPCGAPPSLTFTPPATLVPPTHHHSRSTNRGGVSGTGGGGSGGLQGAPGAGGPRASHSSRRTSRLHNNVSALGVLSLGADVLPEYKLQPTRIHHCTIVHYSPFKAVWDWIILLLVIYTAVFTPYVAAFLLRELQDTAKKSRFTEPLEIVDLIVDIMFIVDIIINFRTTYVNENDEACQVVSDPGKIATHYFKGWFIIDMVAAVPFDLLLVSTNSDETTTLIGLLKTARLLRLVRVARKLDRYSEYGAAVLLLLMATFALIAHWLACIWYAIGSAELSHKEYTWLHQLSKQLAQPYTSTNGTIPTGGPTLKSRYVTSLYFTLSTITSIGFGNVSATTDSEKIFTIIMMILGSLMYASVFGNVSAIIQRLYSGTARYHTEMSRLREFIRFHQIPNPLRQRLEEYFQHAWSYTNGIDMNLVLKGFPDCLQADICLHLNRNLLSGCAAFAGSTPGCLRALSMRFRTTHSPPGDTLVHRGDILTGLYFIARGSVEILNDDNTVMGILGKDDIFGENPLLYDEVGKSSCNVRALTYCDLHKILRDDLLDVLDMYPEFAETFCKNLTITYNLRDDAQSLRKKFDRHKLLRMSSSMNKDRYTTPPDGDHGNAAVRRSAESVSRCDSNPIDRRQSAGSRSSSRCSPPHAALTATRSEATPLLRRSTNHHEEDDALFDDIRAFARGNTVTMSPTVAGNSVSPTTAIHNDGIHSQQLSDRSDDYEERRANMFGRRLESIESQMERMQNKFNSDMETLIKLVKEQSIIRNNGSSNEEPNARYRPNNYISSAIRLPNGGGGGVVDEMRVSRLSSHEPPTPTQETDTIL</sequence>
<keyword id="KW-0025">Alternative splicing</keyword>
<keyword id="KW-1003">Cell membrane</keyword>
<keyword id="KW-0325">Glycoprotein</keyword>
<keyword id="KW-0407">Ion channel</keyword>
<keyword id="KW-0406">Ion transport</keyword>
<keyword id="KW-0472">Membrane</keyword>
<keyword id="KW-0630">Potassium</keyword>
<keyword id="KW-0631">Potassium channel</keyword>
<keyword id="KW-0633">Potassium transport</keyword>
<keyword id="KW-1185">Reference proteome</keyword>
<keyword id="KW-0812">Transmembrane</keyword>
<keyword id="KW-1133">Transmembrane helix</keyword>
<keyword id="KW-0813">Transport</keyword>
<keyword id="KW-0851">Voltage-gated channel</keyword>
<name>UN103_CAEEL</name>
<gene>
    <name evidence="9 11" type="primary">unc-103</name>
    <name evidence="11" type="ORF">C30D11.1</name>
</gene>
<reference key="1">
    <citation type="journal article" date="1999" name="Nature">
        <title>Diverse behavioural defects caused by mutations in Caenorhabditis elegans unc-43 CaM kinase II.</title>
        <authorList>
            <person name="Reiner D.J."/>
            <person name="Newton E.M."/>
            <person name="Tian H."/>
            <person name="Thomas J.H."/>
        </authorList>
    </citation>
    <scope>NUCLEOTIDE SEQUENCE [MRNA] (ISOFORM F)</scope>
</reference>
<reference key="2">
    <citation type="journal article" date="1998" name="Science">
        <title>Genome sequence of the nematode C. elegans: a platform for investigating biology.</title>
        <authorList>
            <consortium name="The C. elegans sequencing consortium"/>
        </authorList>
    </citation>
    <scope>NUCLEOTIDE SEQUENCE [LARGE SCALE GENOMIC DNA]</scope>
    <source>
        <strain>Bristol N2</strain>
    </source>
</reference>
<reference key="3">
    <citation type="journal article" date="2003" name="J. Neurosci.">
        <title>Caenorhabditis elegans UNC-103 ERG-like potassium channel regulates contractile behaviors of sex muscles in males before and during mating.</title>
        <authorList>
            <person name="Garcia L.R."/>
            <person name="Sternberg P.W."/>
        </authorList>
    </citation>
    <scope>FUNCTION</scope>
    <scope>MUTAGENESIS OF HIS-203; TRP-282; GLY-344 AND PRO-464</scope>
</reference>
<reference key="4">
    <citation type="journal article" date="2004" name="Proc. Natl. Acad. Sci. U.S.A.">
        <title>In vivo identification of genes that modify ether-a-go-go-related gene activity in Caenorhabditis elegans may also affect human cardiac arrhythmia.</title>
        <authorList>
            <person name="Petersen C.I."/>
            <person name="McFarland T.R."/>
            <person name="Stepanovic S.Z."/>
            <person name="Yang P."/>
            <person name="Reiner D.J."/>
            <person name="Hayashi K."/>
            <person name="George A.L. Jr."/>
            <person name="Roden D.M."/>
            <person name="Thomas J.H."/>
            <person name="Balser J.R."/>
        </authorList>
    </citation>
    <scope>MUTAGENESIS OF ALA-369</scope>
</reference>
<reference key="5">
    <citation type="journal article" date="2017" name="Mol. Cell">
        <title>Tetrameric assembly of K(+) channels requires ER-located chaperone proteins.</title>
        <authorList>
            <person name="Li K."/>
            <person name="Jiang Q."/>
            <person name="Bai X."/>
            <person name="Yang Y.F."/>
            <person name="Ruan M.Y."/>
            <person name="Cai S.Q."/>
        </authorList>
    </citation>
    <scope>SUBUNIT</scope>
    <scope>INTERACTION WITH DNJ-1</scope>
    <scope>MUTAGENESIS OF ALA-369</scope>
</reference>
<accession>G5EFJ9</accession>
<accession>G5ECG3</accession>
<accession>G5EDE3</accession>
<accession>G5EE47</accession>
<accession>G5EFT6</accession>
<accession>G5EG15</accession>
<accession>G5EG91</accession>
<accession>G5EGQ1</accession>
<accession>M1Z8A0</accession>
<accession>M1ZJW5</accession>
<organism>
    <name type="scientific">Caenorhabditis elegans</name>
    <dbReference type="NCBI Taxonomy" id="6239"/>
    <lineage>
        <taxon>Eukaryota</taxon>
        <taxon>Metazoa</taxon>
        <taxon>Ecdysozoa</taxon>
        <taxon>Nematoda</taxon>
        <taxon>Chromadorea</taxon>
        <taxon>Rhabditida</taxon>
        <taxon>Rhabditina</taxon>
        <taxon>Rhabditomorpha</taxon>
        <taxon>Rhabditoidea</taxon>
        <taxon>Rhabditidae</taxon>
        <taxon>Peloderinae</taxon>
        <taxon>Caenorhabditis</taxon>
    </lineage>
</organism>
<comment type="function">
    <text evidence="1 6">Pore-forming (alpha) subunit of voltage-gated inwardly rectifying potassium channel. Channel properties are modulated by cAMP and subunit assembly (By similarity). Regulates the movements of the male's copulatory spicules before and during male mating behavior (PubMed:12684455).</text>
</comment>
<comment type="subunit">
    <text evidence="8">The potassium channel is composed of a homo- or heterotetrameric complex (PubMed:27916661). Interacts with dnj-1; dnj-1 chaperone promotes tetramerization (PubMed:27916661).</text>
</comment>
<comment type="subcellular location">
    <subcellularLocation>
        <location evidence="1">Cell membrane</location>
        <topology evidence="2">Multi-pass membrane protein</topology>
    </subcellularLocation>
</comment>
<comment type="alternative products">
    <event type="alternative splicing"/>
    <isoform>
        <id>G5EFJ9-1</id>
        <name>a</name>
        <sequence type="displayed"/>
    </isoform>
    <isoform>
        <id>G5EFJ9-2</id>
        <name>c</name>
        <sequence type="described" ref="VSP_058897"/>
    </isoform>
    <isoform>
        <id>G5EFJ9-3</id>
        <name>b</name>
        <sequence type="described" ref="VSP_058896"/>
    </isoform>
    <isoform>
        <id>G5EFJ9-4</id>
        <name>h</name>
        <sequence type="described" ref="VSP_058900 VSP_058903 VSP_058904 VSP_058905"/>
    </isoform>
    <isoform>
        <id>G5EFJ9-5</id>
        <name>e</name>
        <sequence type="described" ref="VSP_058899"/>
    </isoform>
    <isoform>
        <id>G5EFJ9-6</id>
        <name>d</name>
        <sequence type="described" ref="VSP_058898"/>
    </isoform>
    <isoform>
        <id>G5EFJ9-7</id>
        <name>g</name>
        <sequence type="described" ref="VSP_058900 VSP_058903"/>
    </isoform>
    <isoform>
        <id>G5EFJ9-8</id>
        <name>f</name>
        <sequence type="described" ref="VSP_058900"/>
    </isoform>
    <isoform>
        <id>G5EFJ9-9</id>
        <name>i</name>
        <sequence type="described" ref="VSP_058901"/>
    </isoform>
    <isoform>
        <id>G5EFJ9-10</id>
        <name>j</name>
        <sequence type="described" ref="VSP_058902"/>
    </isoform>
</comment>
<comment type="similarity">
    <text evidence="10">Belongs to the potassium channel family. H (Eag) (TC 1.A.1.20) subfamily. Kv11.1/KCNH2 sub-subfamily.</text>
</comment>
<proteinExistence type="evidence at protein level"/>